<organism>
    <name type="scientific">Corynebacterium efficiens (strain DSM 44549 / YS-314 / AJ 12310 / JCM 11189 / NBRC 100395)</name>
    <dbReference type="NCBI Taxonomy" id="196164"/>
    <lineage>
        <taxon>Bacteria</taxon>
        <taxon>Bacillati</taxon>
        <taxon>Actinomycetota</taxon>
        <taxon>Actinomycetes</taxon>
        <taxon>Mycobacteriales</taxon>
        <taxon>Corynebacteriaceae</taxon>
        <taxon>Corynebacterium</taxon>
    </lineage>
</organism>
<evidence type="ECO:0000255" key="1">
    <source>
        <dbReference type="HAMAP-Rule" id="MF_00183"/>
    </source>
</evidence>
<evidence type="ECO:0000305" key="2"/>
<sequence>MVSVTTKILILGSTGSIGTQALEVIADNPDLFTLVGIAAGGSNPGLVIEQARAFNLRPHQVAVAGKQAAGEVGEALGGTVIDGPDAAQTLVESVQATDPADAVLNALVGSMGLGATLATLRSGAHLALANKESLVAGGEFVMAQARPGQIIPVDSEHSAMAQCLRSGTEGEVARIVLTASGGPFRGWTREQMWEVTPEQAAAHPTWSMGQMNTLNSATLINKGLELIEATLLFDTDADLIDVTVHPQSIIHSMITFRDGCTIAQASPPSMKLPIALAMNWPHRVPGAQPALDFTQAHTWTFEPVDDAAFPAVQLARDVAKQKGTFPAVYNAANEEAAAAFLAGRIRFPQIVDVVSEILQGASQFAGVSSDVDDILATESEARARANQLIDRLAR</sequence>
<proteinExistence type="inferred from homology"/>
<accession>Q8FP80</accession>
<protein>
    <recommendedName>
        <fullName evidence="1">1-deoxy-D-xylulose 5-phosphate reductoisomerase</fullName>
        <shortName evidence="1">DXP reductoisomerase</shortName>
        <ecNumber evidence="1">1.1.1.267</ecNumber>
    </recommendedName>
    <alternativeName>
        <fullName evidence="1">1-deoxyxylulose-5-phosphate reductoisomerase</fullName>
    </alternativeName>
    <alternativeName>
        <fullName evidence="1">2-C-methyl-D-erythritol 4-phosphate synthase</fullName>
    </alternativeName>
</protein>
<feature type="chain" id="PRO_0000163641" description="1-deoxy-D-xylulose 5-phosphate reductoisomerase">
    <location>
        <begin position="1"/>
        <end position="394"/>
    </location>
</feature>
<feature type="binding site" evidence="1">
    <location>
        <position position="14"/>
    </location>
    <ligand>
        <name>NADPH</name>
        <dbReference type="ChEBI" id="CHEBI:57783"/>
    </ligand>
</feature>
<feature type="binding site" evidence="1">
    <location>
        <position position="15"/>
    </location>
    <ligand>
        <name>NADPH</name>
        <dbReference type="ChEBI" id="CHEBI:57783"/>
    </ligand>
</feature>
<feature type="binding site" evidence="1">
    <location>
        <position position="16"/>
    </location>
    <ligand>
        <name>NADPH</name>
        <dbReference type="ChEBI" id="CHEBI:57783"/>
    </ligand>
</feature>
<feature type="binding site" evidence="1">
    <location>
        <position position="17"/>
    </location>
    <ligand>
        <name>NADPH</name>
        <dbReference type="ChEBI" id="CHEBI:57783"/>
    </ligand>
</feature>
<feature type="binding site" evidence="1">
    <location>
        <position position="40"/>
    </location>
    <ligand>
        <name>NADPH</name>
        <dbReference type="ChEBI" id="CHEBI:57783"/>
    </ligand>
</feature>
<feature type="binding site" evidence="1">
    <location>
        <position position="43"/>
    </location>
    <ligand>
        <name>NADPH</name>
        <dbReference type="ChEBI" id="CHEBI:57783"/>
    </ligand>
</feature>
<feature type="binding site" evidence="1">
    <location>
        <position position="130"/>
    </location>
    <ligand>
        <name>NADPH</name>
        <dbReference type="ChEBI" id="CHEBI:57783"/>
    </ligand>
</feature>
<feature type="binding site" evidence="1">
    <location>
        <position position="131"/>
    </location>
    <ligand>
        <name>1-deoxy-D-xylulose 5-phosphate</name>
        <dbReference type="ChEBI" id="CHEBI:57792"/>
    </ligand>
</feature>
<feature type="binding site" evidence="1">
    <location>
        <position position="132"/>
    </location>
    <ligand>
        <name>NADPH</name>
        <dbReference type="ChEBI" id="CHEBI:57783"/>
    </ligand>
</feature>
<feature type="binding site" evidence="1">
    <location>
        <position position="154"/>
    </location>
    <ligand>
        <name>Mn(2+)</name>
        <dbReference type="ChEBI" id="CHEBI:29035"/>
    </ligand>
</feature>
<feature type="binding site" evidence="1">
    <location>
        <position position="155"/>
    </location>
    <ligand>
        <name>1-deoxy-D-xylulose 5-phosphate</name>
        <dbReference type="ChEBI" id="CHEBI:57792"/>
    </ligand>
</feature>
<feature type="binding site" evidence="1">
    <location>
        <position position="156"/>
    </location>
    <ligand>
        <name>1-deoxy-D-xylulose 5-phosphate</name>
        <dbReference type="ChEBI" id="CHEBI:57792"/>
    </ligand>
</feature>
<feature type="binding site" evidence="1">
    <location>
        <position position="156"/>
    </location>
    <ligand>
        <name>Mn(2+)</name>
        <dbReference type="ChEBI" id="CHEBI:29035"/>
    </ligand>
</feature>
<feature type="binding site" evidence="1">
    <location>
        <position position="180"/>
    </location>
    <ligand>
        <name>1-deoxy-D-xylulose 5-phosphate</name>
        <dbReference type="ChEBI" id="CHEBI:57792"/>
    </ligand>
</feature>
<feature type="binding site" evidence="1">
    <location>
        <position position="203"/>
    </location>
    <ligand>
        <name>1-deoxy-D-xylulose 5-phosphate</name>
        <dbReference type="ChEBI" id="CHEBI:57792"/>
    </ligand>
</feature>
<feature type="binding site" evidence="1">
    <location>
        <position position="209"/>
    </location>
    <ligand>
        <name>NADPH</name>
        <dbReference type="ChEBI" id="CHEBI:57783"/>
    </ligand>
</feature>
<feature type="binding site" evidence="1">
    <location>
        <position position="216"/>
    </location>
    <ligand>
        <name>1-deoxy-D-xylulose 5-phosphate</name>
        <dbReference type="ChEBI" id="CHEBI:57792"/>
    </ligand>
</feature>
<feature type="binding site" evidence="1">
    <location>
        <position position="221"/>
    </location>
    <ligand>
        <name>1-deoxy-D-xylulose 5-phosphate</name>
        <dbReference type="ChEBI" id="CHEBI:57792"/>
    </ligand>
</feature>
<feature type="binding site" evidence="1">
    <location>
        <position position="222"/>
    </location>
    <ligand>
        <name>1-deoxy-D-xylulose 5-phosphate</name>
        <dbReference type="ChEBI" id="CHEBI:57792"/>
    </ligand>
</feature>
<feature type="binding site" evidence="1">
    <location>
        <position position="225"/>
    </location>
    <ligand>
        <name>1-deoxy-D-xylulose 5-phosphate</name>
        <dbReference type="ChEBI" id="CHEBI:57792"/>
    </ligand>
</feature>
<feature type="binding site" evidence="1">
    <location>
        <position position="225"/>
    </location>
    <ligand>
        <name>Mn(2+)</name>
        <dbReference type="ChEBI" id="CHEBI:29035"/>
    </ligand>
</feature>
<reference key="1">
    <citation type="journal article" date="2003" name="Genome Res.">
        <title>Comparative complete genome sequence analysis of the amino acid replacements responsible for the thermostability of Corynebacterium efficiens.</title>
        <authorList>
            <person name="Nishio Y."/>
            <person name="Nakamura Y."/>
            <person name="Kawarabayasi Y."/>
            <person name="Usuda Y."/>
            <person name="Kimura E."/>
            <person name="Sugimoto S."/>
            <person name="Matsui K."/>
            <person name="Yamagishi A."/>
            <person name="Kikuchi H."/>
            <person name="Ikeo K."/>
            <person name="Gojobori T."/>
        </authorList>
    </citation>
    <scope>NUCLEOTIDE SEQUENCE [LARGE SCALE GENOMIC DNA]</scope>
    <source>
        <strain>DSM 44549 / YS-314 / AJ 12310 / JCM 11189 / NBRC 100395</strain>
    </source>
</reference>
<comment type="function">
    <text evidence="1">Catalyzes the NADPH-dependent rearrangement and reduction of 1-deoxy-D-xylulose-5-phosphate (DXP) to 2-C-methyl-D-erythritol 4-phosphate (MEP).</text>
</comment>
<comment type="catalytic activity">
    <reaction evidence="1">
        <text>2-C-methyl-D-erythritol 4-phosphate + NADP(+) = 1-deoxy-D-xylulose 5-phosphate + NADPH + H(+)</text>
        <dbReference type="Rhea" id="RHEA:13717"/>
        <dbReference type="ChEBI" id="CHEBI:15378"/>
        <dbReference type="ChEBI" id="CHEBI:57783"/>
        <dbReference type="ChEBI" id="CHEBI:57792"/>
        <dbReference type="ChEBI" id="CHEBI:58262"/>
        <dbReference type="ChEBI" id="CHEBI:58349"/>
        <dbReference type="EC" id="1.1.1.267"/>
    </reaction>
    <physiologicalReaction direction="right-to-left" evidence="1">
        <dbReference type="Rhea" id="RHEA:13719"/>
    </physiologicalReaction>
</comment>
<comment type="cofactor">
    <cofactor evidence="1">
        <name>Mg(2+)</name>
        <dbReference type="ChEBI" id="CHEBI:18420"/>
    </cofactor>
    <cofactor evidence="1">
        <name>Mn(2+)</name>
        <dbReference type="ChEBI" id="CHEBI:29035"/>
    </cofactor>
</comment>
<comment type="pathway">
    <text evidence="1">Isoprenoid biosynthesis; isopentenyl diphosphate biosynthesis via DXP pathway; isopentenyl diphosphate from 1-deoxy-D-xylulose 5-phosphate: step 1/6.</text>
</comment>
<comment type="similarity">
    <text evidence="1">Belongs to the DXR family.</text>
</comment>
<comment type="sequence caution" evidence="2">
    <conflict type="erroneous initiation">
        <sequence resource="EMBL-CDS" id="BAC18715"/>
    </conflict>
</comment>
<dbReference type="EC" id="1.1.1.267" evidence="1"/>
<dbReference type="EMBL" id="BA000035">
    <property type="protein sequence ID" value="BAC18715.1"/>
    <property type="status" value="ALT_INIT"/>
    <property type="molecule type" value="Genomic_DNA"/>
</dbReference>
<dbReference type="RefSeq" id="WP_006767907.1">
    <property type="nucleotide sequence ID" value="NC_004369.1"/>
</dbReference>
<dbReference type="SMR" id="Q8FP80"/>
<dbReference type="STRING" id="196164.gene:10742333"/>
<dbReference type="KEGG" id="cef:CE1905"/>
<dbReference type="eggNOG" id="COG0743">
    <property type="taxonomic scope" value="Bacteria"/>
</dbReference>
<dbReference type="HOGENOM" id="CLU_035714_1_0_11"/>
<dbReference type="OrthoDB" id="9806546at2"/>
<dbReference type="UniPathway" id="UPA00056">
    <property type="reaction ID" value="UER00092"/>
</dbReference>
<dbReference type="Proteomes" id="UP000001409">
    <property type="component" value="Chromosome"/>
</dbReference>
<dbReference type="GO" id="GO:0030604">
    <property type="term" value="F:1-deoxy-D-xylulose-5-phosphate reductoisomerase activity"/>
    <property type="evidence" value="ECO:0007669"/>
    <property type="project" value="UniProtKB-UniRule"/>
</dbReference>
<dbReference type="GO" id="GO:0030145">
    <property type="term" value="F:manganese ion binding"/>
    <property type="evidence" value="ECO:0007669"/>
    <property type="project" value="TreeGrafter"/>
</dbReference>
<dbReference type="GO" id="GO:0070402">
    <property type="term" value="F:NADPH binding"/>
    <property type="evidence" value="ECO:0007669"/>
    <property type="project" value="InterPro"/>
</dbReference>
<dbReference type="GO" id="GO:0051484">
    <property type="term" value="P:isopentenyl diphosphate biosynthetic process, methylerythritol 4-phosphate pathway involved in terpenoid biosynthetic process"/>
    <property type="evidence" value="ECO:0007669"/>
    <property type="project" value="TreeGrafter"/>
</dbReference>
<dbReference type="Gene3D" id="1.10.1740.10">
    <property type="match status" value="1"/>
</dbReference>
<dbReference type="Gene3D" id="3.40.50.720">
    <property type="entry name" value="NAD(P)-binding Rossmann-like Domain"/>
    <property type="match status" value="1"/>
</dbReference>
<dbReference type="HAMAP" id="MF_00183">
    <property type="entry name" value="DXP_reductoisom"/>
    <property type="match status" value="1"/>
</dbReference>
<dbReference type="InterPro" id="IPR003821">
    <property type="entry name" value="DXP_reductoisomerase"/>
</dbReference>
<dbReference type="InterPro" id="IPR013644">
    <property type="entry name" value="DXP_reductoisomerase_C"/>
</dbReference>
<dbReference type="InterPro" id="IPR013512">
    <property type="entry name" value="DXP_reductoisomerase_N"/>
</dbReference>
<dbReference type="InterPro" id="IPR026877">
    <property type="entry name" value="DXPR_C"/>
</dbReference>
<dbReference type="InterPro" id="IPR036169">
    <property type="entry name" value="DXPR_C_sf"/>
</dbReference>
<dbReference type="InterPro" id="IPR036291">
    <property type="entry name" value="NAD(P)-bd_dom_sf"/>
</dbReference>
<dbReference type="NCBIfam" id="TIGR00243">
    <property type="entry name" value="Dxr"/>
    <property type="match status" value="1"/>
</dbReference>
<dbReference type="PANTHER" id="PTHR30525">
    <property type="entry name" value="1-DEOXY-D-XYLULOSE 5-PHOSPHATE REDUCTOISOMERASE"/>
    <property type="match status" value="1"/>
</dbReference>
<dbReference type="PANTHER" id="PTHR30525:SF0">
    <property type="entry name" value="1-DEOXY-D-XYLULOSE 5-PHOSPHATE REDUCTOISOMERASE, CHLOROPLASTIC"/>
    <property type="match status" value="1"/>
</dbReference>
<dbReference type="Pfam" id="PF08436">
    <property type="entry name" value="DXP_redisom_C"/>
    <property type="match status" value="1"/>
</dbReference>
<dbReference type="Pfam" id="PF02670">
    <property type="entry name" value="DXP_reductoisom"/>
    <property type="match status" value="1"/>
</dbReference>
<dbReference type="Pfam" id="PF13288">
    <property type="entry name" value="DXPR_C"/>
    <property type="match status" value="1"/>
</dbReference>
<dbReference type="PIRSF" id="PIRSF006205">
    <property type="entry name" value="Dxp_reductismrs"/>
    <property type="match status" value="1"/>
</dbReference>
<dbReference type="SUPFAM" id="SSF69055">
    <property type="entry name" value="1-deoxy-D-xylulose-5-phosphate reductoisomerase, C-terminal domain"/>
    <property type="match status" value="1"/>
</dbReference>
<dbReference type="SUPFAM" id="SSF55347">
    <property type="entry name" value="Glyceraldehyde-3-phosphate dehydrogenase-like, C-terminal domain"/>
    <property type="match status" value="1"/>
</dbReference>
<dbReference type="SUPFAM" id="SSF51735">
    <property type="entry name" value="NAD(P)-binding Rossmann-fold domains"/>
    <property type="match status" value="1"/>
</dbReference>
<name>DXR_COREF</name>
<keyword id="KW-0414">Isoprene biosynthesis</keyword>
<keyword id="KW-0464">Manganese</keyword>
<keyword id="KW-0479">Metal-binding</keyword>
<keyword id="KW-0521">NADP</keyword>
<keyword id="KW-0560">Oxidoreductase</keyword>
<keyword id="KW-1185">Reference proteome</keyword>
<gene>
    <name evidence="1" type="primary">dxr</name>
    <name type="ordered locus">CE1905</name>
</gene>